<sequence length="191" mass="21309">MQSIKCVVVGDGAVGKTCLLICYTTNAFPKEYIPTVFDNYSAQSAVDGRTVNLNLWDTAGQEEYDRLRTLSYPQTNVFVICFSIASPPSYENVRHKWHPEVCHHCPDVPILLVGTKKDLRAQPDTLRRLKEQGQAPITPQQGQALAKQIHAVRYLECSALQQDGVKEVFAEAVRAVLNPTPIKRGRSCILL</sequence>
<dbReference type="EMBL" id="X61588">
    <property type="protein sequence ID" value="CAA43785.1"/>
    <property type="molecule type" value="mRNA"/>
</dbReference>
<dbReference type="PIR" id="S25723">
    <property type="entry name" value="S25723"/>
</dbReference>
<dbReference type="SMR" id="P84097"/>
<dbReference type="GO" id="GO:0005886">
    <property type="term" value="C:plasma membrane"/>
    <property type="evidence" value="ECO:0007669"/>
    <property type="project" value="UniProtKB-SubCell"/>
</dbReference>
<dbReference type="GO" id="GO:0005525">
    <property type="term" value="F:GTP binding"/>
    <property type="evidence" value="ECO:0007669"/>
    <property type="project" value="UniProtKB-KW"/>
</dbReference>
<dbReference type="GO" id="GO:0003924">
    <property type="term" value="F:GTPase activity"/>
    <property type="evidence" value="ECO:0007669"/>
    <property type="project" value="InterPro"/>
</dbReference>
<dbReference type="GO" id="GO:0090630">
    <property type="term" value="P:activation of GTPase activity"/>
    <property type="evidence" value="ECO:0000250"/>
    <property type="project" value="UniProtKB"/>
</dbReference>
<dbReference type="GO" id="GO:0060326">
    <property type="term" value="P:cell chemotaxis"/>
    <property type="evidence" value="ECO:0000250"/>
    <property type="project" value="UniProtKB"/>
</dbReference>
<dbReference type="GO" id="GO:1903078">
    <property type="term" value="P:positive regulation of protein localization to plasma membrane"/>
    <property type="evidence" value="ECO:0000250"/>
    <property type="project" value="UniProtKB"/>
</dbReference>
<dbReference type="GO" id="GO:0007264">
    <property type="term" value="P:small GTPase-mediated signal transduction"/>
    <property type="evidence" value="ECO:0007669"/>
    <property type="project" value="InterPro"/>
</dbReference>
<dbReference type="CDD" id="cd01875">
    <property type="entry name" value="RhoG"/>
    <property type="match status" value="1"/>
</dbReference>
<dbReference type="FunFam" id="3.40.50.300:FF:000118">
    <property type="entry name" value="Rho-related GTP-binding protein RhoG"/>
    <property type="match status" value="1"/>
</dbReference>
<dbReference type="Gene3D" id="3.40.50.300">
    <property type="entry name" value="P-loop containing nucleotide triphosphate hydrolases"/>
    <property type="match status" value="1"/>
</dbReference>
<dbReference type="InterPro" id="IPR027417">
    <property type="entry name" value="P-loop_NTPase"/>
</dbReference>
<dbReference type="InterPro" id="IPR042734">
    <property type="entry name" value="RhoG"/>
</dbReference>
<dbReference type="InterPro" id="IPR005225">
    <property type="entry name" value="Small_GTP-bd"/>
</dbReference>
<dbReference type="InterPro" id="IPR001806">
    <property type="entry name" value="Small_GTPase"/>
</dbReference>
<dbReference type="InterPro" id="IPR003578">
    <property type="entry name" value="Small_GTPase_Rho"/>
</dbReference>
<dbReference type="NCBIfam" id="TIGR00231">
    <property type="entry name" value="small_GTP"/>
    <property type="match status" value="1"/>
</dbReference>
<dbReference type="PANTHER" id="PTHR24072">
    <property type="entry name" value="RHO FAMILY GTPASE"/>
    <property type="match status" value="1"/>
</dbReference>
<dbReference type="Pfam" id="PF00071">
    <property type="entry name" value="Ras"/>
    <property type="match status" value="1"/>
</dbReference>
<dbReference type="PRINTS" id="PR00449">
    <property type="entry name" value="RASTRNSFRMNG"/>
</dbReference>
<dbReference type="SMART" id="SM00175">
    <property type="entry name" value="RAB"/>
    <property type="match status" value="1"/>
</dbReference>
<dbReference type="SMART" id="SM00176">
    <property type="entry name" value="RAN"/>
    <property type="match status" value="1"/>
</dbReference>
<dbReference type="SMART" id="SM00173">
    <property type="entry name" value="RAS"/>
    <property type="match status" value="1"/>
</dbReference>
<dbReference type="SMART" id="SM00174">
    <property type="entry name" value="RHO"/>
    <property type="match status" value="1"/>
</dbReference>
<dbReference type="SUPFAM" id="SSF52540">
    <property type="entry name" value="P-loop containing nucleoside triphosphate hydrolases"/>
    <property type="match status" value="1"/>
</dbReference>
<dbReference type="PROSITE" id="PS51420">
    <property type="entry name" value="RHO"/>
    <property type="match status" value="1"/>
</dbReference>
<name>RHOG_CRICR</name>
<comment type="function">
    <text evidence="2">Plays a role in immunological synaptic F-actin density and architecture organization (By similarity). Regulates actin reorganization in lymphocytes, possibly through the modulation of Rac1 activity (By similarity). Required for the formation of membrane ruffles during macropinocytosis (By similarity). Plays a role in cell migration and is required for the formation of cup-like structures during trans-endothelial migration of leukocytes (By similarity). Binds phospholipids in an activation-dependent manner; thereby acting as an anchor for other proteins to the plasma membrane (PM) (By similarity). Plays a role in exocytosis of cytotoxic granules (CG) by lymphocytes/Component of the exocytosis machinery in natural killer (NK) and CD8+ T cells (By similarity). Promotes the docking of cytotoxic granules (CG) to the plasma membrane through the interaction with UNC13D (By similarity). Involved in the cytotoxic activity of lymphocytes/primary CD8+ T cells (By similarity).</text>
</comment>
<comment type="subunit">
    <text evidence="2">Interacts with ARHGEF26 (By similarity). Interacts with ARHGEF16 (By similarity). Interacts with UNC13D; the interaction increases RhoG affinity to the membrane lipids, targets UNC13D to membrane lipids and facilitates cytotoxic granule (CG) docking to the plasma membrane (By similarity).</text>
</comment>
<comment type="subcellular location">
    <subcellularLocation>
        <location evidence="4">Cell membrane</location>
        <topology evidence="4">Lipid-anchor</topology>
        <orientation evidence="4">Cytoplasmic side</orientation>
    </subcellularLocation>
</comment>
<comment type="similarity">
    <text evidence="4">Belongs to the small GTPase superfamily. Rho family.</text>
</comment>
<feature type="chain" id="PRO_0000042026" description="Rho-related GTP-binding protein RhoG">
    <location>
        <begin position="1"/>
        <end position="188"/>
    </location>
</feature>
<feature type="propeptide" id="PRO_0000042027" description="Removed in mature form" evidence="1">
    <location>
        <begin position="189"/>
        <end position="191"/>
    </location>
</feature>
<feature type="short sequence motif" description="Effector region" evidence="3">
    <location>
        <begin position="32"/>
        <end position="40"/>
    </location>
</feature>
<feature type="binding site" evidence="1">
    <location>
        <begin position="10"/>
        <end position="17"/>
    </location>
    <ligand>
        <name>GTP</name>
        <dbReference type="ChEBI" id="CHEBI:37565"/>
    </ligand>
</feature>
<feature type="binding site" evidence="1">
    <location>
        <begin position="57"/>
        <end position="61"/>
    </location>
    <ligand>
        <name>GTP</name>
        <dbReference type="ChEBI" id="CHEBI:37565"/>
    </ligand>
</feature>
<feature type="binding site" evidence="1">
    <location>
        <begin position="115"/>
        <end position="118"/>
    </location>
    <ligand>
        <name>GTP</name>
        <dbReference type="ChEBI" id="CHEBI:37565"/>
    </ligand>
</feature>
<feature type="modified residue" description="Phosphothreonine" evidence="2">
    <location>
        <position position="138"/>
    </location>
</feature>
<feature type="modified residue" description="Phosphothreonine" evidence="2">
    <location>
        <position position="180"/>
    </location>
</feature>
<feature type="modified residue" description="Cysteine methyl ester" evidence="1">
    <location>
        <position position="188"/>
    </location>
</feature>
<feature type="lipid moiety-binding region" description="S-geranylgeranyl cysteine" evidence="1">
    <location>
        <position position="188"/>
    </location>
</feature>
<protein>
    <recommendedName>
        <fullName>Rho-related GTP-binding protein RhoG</fullName>
    </recommendedName>
</protein>
<keyword id="KW-1003">Cell membrane</keyword>
<keyword id="KW-0342">GTP-binding</keyword>
<keyword id="KW-0449">Lipoprotein</keyword>
<keyword id="KW-0472">Membrane</keyword>
<keyword id="KW-0488">Methylation</keyword>
<keyword id="KW-0547">Nucleotide-binding</keyword>
<keyword id="KW-0597">Phosphoprotein</keyword>
<keyword id="KW-0636">Prenylation</keyword>
<accession>P84097</accession>
<accession>P35238</accession>
<accession>Q8NI04</accession>
<evidence type="ECO:0000250" key="1"/>
<evidence type="ECO:0000250" key="2">
    <source>
        <dbReference type="UniProtKB" id="P84095"/>
    </source>
</evidence>
<evidence type="ECO:0000255" key="3"/>
<evidence type="ECO:0000305" key="4"/>
<gene>
    <name type="primary">RHOG</name>
    <name type="synonym">ARHG</name>
</gene>
<reference key="1">
    <citation type="journal article" date="1992" name="Mol. Cell. Biol.">
        <title>Growth-regulated expression of rhoG, a new member of the ras homolog gene family.</title>
        <authorList>
            <person name="Vincent S."/>
            <person name="Jeanteur P."/>
            <person name="Fort P."/>
        </authorList>
    </citation>
    <scope>NUCLEOTIDE SEQUENCE [MRNA]</scope>
</reference>
<organism>
    <name type="scientific">Cricetus cricetus</name>
    <name type="common">Black-bellied hamster</name>
    <dbReference type="NCBI Taxonomy" id="10034"/>
    <lineage>
        <taxon>Eukaryota</taxon>
        <taxon>Metazoa</taxon>
        <taxon>Chordata</taxon>
        <taxon>Craniata</taxon>
        <taxon>Vertebrata</taxon>
        <taxon>Euteleostomi</taxon>
        <taxon>Mammalia</taxon>
        <taxon>Eutheria</taxon>
        <taxon>Euarchontoglires</taxon>
        <taxon>Glires</taxon>
        <taxon>Rodentia</taxon>
        <taxon>Myomorpha</taxon>
        <taxon>Muroidea</taxon>
        <taxon>Cricetidae</taxon>
        <taxon>Cricetinae</taxon>
        <taxon>Cricetus</taxon>
    </lineage>
</organism>
<proteinExistence type="evidence at transcript level"/>